<comment type="function">
    <text>Converts the product of 2-hydroxy-6-oxo-2,4-heptadienoate hydrolase.</text>
</comment>
<comment type="pathway">
    <text>Xenobiotic degradation; toluene degradation.</text>
</comment>
<comment type="similarity">
    <text evidence="1">Belongs to the hydratase/decarboxylase family.</text>
</comment>
<sequence>MSELDTARTGAVRKAADLLYEATRSGVAVVPVRNLIGETDLEAAYAVQEVNTQRALVAGRRLVGRKIGLTSVAVQKQLGVEQPDYGMLFADMARTEGEEIALDDVLQPKVEAEIAFVLGRDLDGDQLTVADLFRAIEFAVPAIEIVGSRITNWDIRITDTIADNASSGLYVLGSTPKRLCDFDSRQAGMVMERQGIPVSSGVGAACLGAPLNAVLWLARVMARAGRPLRTGDTVLSGALGPMVPVAGGDVFDVRIAGLGSVTAAFAKA</sequence>
<dbReference type="EC" id="4.2.-.-"/>
<dbReference type="EMBL" id="CP000712">
    <property type="protein sequence ID" value="ABQ79006.1"/>
    <property type="molecule type" value="Genomic_DNA"/>
</dbReference>
<dbReference type="EMBL" id="J04996">
    <property type="status" value="NOT_ANNOTATED_CDS"/>
    <property type="molecule type" value="Genomic_DNA"/>
</dbReference>
<dbReference type="SMR" id="P23149"/>
<dbReference type="KEGG" id="ppf:Pput_2875"/>
<dbReference type="eggNOG" id="COG3971">
    <property type="taxonomic scope" value="Bacteria"/>
</dbReference>
<dbReference type="HOGENOM" id="CLU_060136_4_1_6"/>
<dbReference type="UniPathway" id="UPA00273"/>
<dbReference type="GO" id="GO:0005737">
    <property type="term" value="C:cytoplasm"/>
    <property type="evidence" value="ECO:0007669"/>
    <property type="project" value="TreeGrafter"/>
</dbReference>
<dbReference type="GO" id="GO:0008684">
    <property type="term" value="F:2-oxopent-4-enoate hydratase activity"/>
    <property type="evidence" value="ECO:0007669"/>
    <property type="project" value="TreeGrafter"/>
</dbReference>
<dbReference type="GO" id="GO:0042203">
    <property type="term" value="P:toluene catabolic process"/>
    <property type="evidence" value="ECO:0007669"/>
    <property type="project" value="UniProtKB-UniPathway"/>
</dbReference>
<dbReference type="Gene3D" id="3.90.850.10">
    <property type="entry name" value="Fumarylacetoacetase-like, C-terminal domain"/>
    <property type="match status" value="1"/>
</dbReference>
<dbReference type="InterPro" id="IPR011234">
    <property type="entry name" value="Fumarylacetoacetase-like_C"/>
</dbReference>
<dbReference type="InterPro" id="IPR036663">
    <property type="entry name" value="Fumarylacetoacetase_C_sf"/>
</dbReference>
<dbReference type="InterPro" id="IPR050772">
    <property type="entry name" value="Hydratase-Decarb/MhpD_sf"/>
</dbReference>
<dbReference type="PANTHER" id="PTHR30143:SF0">
    <property type="entry name" value="2-KETO-4-PENTENOATE HYDRATASE"/>
    <property type="match status" value="1"/>
</dbReference>
<dbReference type="PANTHER" id="PTHR30143">
    <property type="entry name" value="ACID HYDRATASE"/>
    <property type="match status" value="1"/>
</dbReference>
<dbReference type="Pfam" id="PF01557">
    <property type="entry name" value="FAA_hydrolase"/>
    <property type="match status" value="1"/>
</dbReference>
<dbReference type="SUPFAM" id="SSF56529">
    <property type="entry name" value="FAH"/>
    <property type="match status" value="1"/>
</dbReference>
<evidence type="ECO:0000305" key="1"/>
<protein>
    <recommendedName>
        <fullName>TodF product hydratase</fullName>
        <ecNumber>4.2.-.-</ecNumber>
    </recommendedName>
</protein>
<gene>
    <name type="primary">todJ</name>
    <name type="ordered locus">Pput_2875</name>
</gene>
<proteinExistence type="inferred from homology"/>
<name>TODJ_PSEP1</name>
<feature type="chain" id="PRO_0000072619" description="TodF product hydratase">
    <location>
        <begin position="1"/>
        <end position="268"/>
    </location>
</feature>
<accession>P23149</accession>
<accession>A5W4E6</accession>
<keyword id="KW-0058">Aromatic hydrocarbons catabolism</keyword>
<keyword id="KW-0456">Lyase</keyword>
<organism>
    <name type="scientific">Pseudomonas putida (strain ATCC 700007 / DSM 6899 / JCM 31910 / BCRC 17059 / LMG 24140 / F1)</name>
    <dbReference type="NCBI Taxonomy" id="351746"/>
    <lineage>
        <taxon>Bacteria</taxon>
        <taxon>Pseudomonadati</taxon>
        <taxon>Pseudomonadota</taxon>
        <taxon>Gammaproteobacteria</taxon>
        <taxon>Pseudomonadales</taxon>
        <taxon>Pseudomonadaceae</taxon>
        <taxon>Pseudomonas</taxon>
    </lineage>
</organism>
<reference key="1">
    <citation type="submission" date="2007-05" db="EMBL/GenBank/DDBJ databases">
        <title>Complete sequence of Pseudomonas putida F1.</title>
        <authorList>
            <consortium name="US DOE Joint Genome Institute"/>
            <person name="Copeland A."/>
            <person name="Lucas S."/>
            <person name="Lapidus A."/>
            <person name="Barry K."/>
            <person name="Detter J.C."/>
            <person name="Glavina del Rio T."/>
            <person name="Hammon N."/>
            <person name="Israni S."/>
            <person name="Dalin E."/>
            <person name="Tice H."/>
            <person name="Pitluck S."/>
            <person name="Chain P."/>
            <person name="Malfatti S."/>
            <person name="Shin M."/>
            <person name="Vergez L."/>
            <person name="Schmutz J."/>
            <person name="Larimer F."/>
            <person name="Land M."/>
            <person name="Hauser L."/>
            <person name="Kyrpides N."/>
            <person name="Lykidis A."/>
            <person name="Parales R."/>
            <person name="Richardson P."/>
        </authorList>
    </citation>
    <scope>NUCLEOTIDE SEQUENCE [LARGE SCALE GENOMIC DNA]</scope>
    <source>
        <strain>ATCC 700007 / DSM 6899 / JCM 31910 / BCRC 17059 / LMG 24140 / F1</strain>
    </source>
</reference>
<reference key="2">
    <citation type="journal article" date="1989" name="J. Biol. Chem.">
        <title>Toluene degradation by Pseudomonas putida F1. Nucleotide sequence of the todC1C2BADE genes and their expression in Escherichia coli.</title>
        <authorList>
            <person name="Zylstra G.J."/>
            <person name="Gibson D.T."/>
        </authorList>
    </citation>
    <scope>NUCLEOTIDE SEQUENCE [GENOMIC DNA] OF 1-223</scope>
</reference>